<comment type="function">
    <text evidence="1">NDH-1 shuttles electrons from NAD(P)H, via FMN and iron-sulfur (Fe-S) centers, to quinones in the respiratory chain. The immediate electron acceptor for the enzyme in this species is believed to be plastoquinone. Couples the redox reaction to proton translocation (for every two electrons transferred, four hydrogen ions are translocated across the cytoplasmic membrane), and thus conserves the redox energy in a proton gradient.</text>
</comment>
<comment type="catalytic activity">
    <reaction evidence="1">
        <text>a plastoquinone + NADH + (n+1) H(+)(in) = a plastoquinol + NAD(+) + n H(+)(out)</text>
        <dbReference type="Rhea" id="RHEA:42608"/>
        <dbReference type="Rhea" id="RHEA-COMP:9561"/>
        <dbReference type="Rhea" id="RHEA-COMP:9562"/>
        <dbReference type="ChEBI" id="CHEBI:15378"/>
        <dbReference type="ChEBI" id="CHEBI:17757"/>
        <dbReference type="ChEBI" id="CHEBI:57540"/>
        <dbReference type="ChEBI" id="CHEBI:57945"/>
        <dbReference type="ChEBI" id="CHEBI:62192"/>
    </reaction>
</comment>
<comment type="catalytic activity">
    <reaction evidence="1">
        <text>a plastoquinone + NADPH + (n+1) H(+)(in) = a plastoquinol + NADP(+) + n H(+)(out)</text>
        <dbReference type="Rhea" id="RHEA:42612"/>
        <dbReference type="Rhea" id="RHEA-COMP:9561"/>
        <dbReference type="Rhea" id="RHEA-COMP:9562"/>
        <dbReference type="ChEBI" id="CHEBI:15378"/>
        <dbReference type="ChEBI" id="CHEBI:17757"/>
        <dbReference type="ChEBI" id="CHEBI:57783"/>
        <dbReference type="ChEBI" id="CHEBI:58349"/>
        <dbReference type="ChEBI" id="CHEBI:62192"/>
    </reaction>
</comment>
<comment type="subcellular location">
    <subcellularLocation>
        <location evidence="1">Cellular thylakoid membrane</location>
        <topology evidence="1">Multi-pass membrane protein</topology>
    </subcellularLocation>
</comment>
<comment type="similarity">
    <text evidence="1">Belongs to the complex I subunit 4 family.</text>
</comment>
<organism>
    <name type="scientific">Prochlorococcus marinus (strain AS9601)</name>
    <dbReference type="NCBI Taxonomy" id="146891"/>
    <lineage>
        <taxon>Bacteria</taxon>
        <taxon>Bacillati</taxon>
        <taxon>Cyanobacteriota</taxon>
        <taxon>Cyanophyceae</taxon>
        <taxon>Synechococcales</taxon>
        <taxon>Prochlorococcaceae</taxon>
        <taxon>Prochlorococcus</taxon>
    </lineage>
</organism>
<protein>
    <recommendedName>
        <fullName evidence="1">NAD(P)H-quinone oxidoreductase chain 4</fullName>
        <ecNumber evidence="1">7.1.1.-</ecNumber>
    </recommendedName>
    <alternativeName>
        <fullName evidence="1">NAD(P)H dehydrogenase I, chain 4</fullName>
    </alternativeName>
    <alternativeName>
        <fullName evidence="1">NDH-1, chain 4</fullName>
    </alternativeName>
</protein>
<dbReference type="EC" id="7.1.1.-" evidence="1"/>
<dbReference type="EMBL" id="CP000551">
    <property type="protein sequence ID" value="ABM69455.1"/>
    <property type="molecule type" value="Genomic_DNA"/>
</dbReference>
<dbReference type="RefSeq" id="WP_011817642.1">
    <property type="nucleotide sequence ID" value="NC_008816.1"/>
</dbReference>
<dbReference type="SMR" id="A2BNU4"/>
<dbReference type="STRING" id="146891.A9601_01671"/>
<dbReference type="KEGG" id="pmb:A9601_01671"/>
<dbReference type="eggNOG" id="COG1008">
    <property type="taxonomic scope" value="Bacteria"/>
</dbReference>
<dbReference type="HOGENOM" id="CLU_007100_4_0_3"/>
<dbReference type="OrthoDB" id="9811718at2"/>
<dbReference type="Proteomes" id="UP000002590">
    <property type="component" value="Chromosome"/>
</dbReference>
<dbReference type="GO" id="GO:0031676">
    <property type="term" value="C:plasma membrane-derived thylakoid membrane"/>
    <property type="evidence" value="ECO:0007669"/>
    <property type="project" value="UniProtKB-SubCell"/>
</dbReference>
<dbReference type="GO" id="GO:0008137">
    <property type="term" value="F:NADH dehydrogenase (ubiquinone) activity"/>
    <property type="evidence" value="ECO:0007669"/>
    <property type="project" value="InterPro"/>
</dbReference>
<dbReference type="GO" id="GO:0048039">
    <property type="term" value="F:ubiquinone binding"/>
    <property type="evidence" value="ECO:0007669"/>
    <property type="project" value="TreeGrafter"/>
</dbReference>
<dbReference type="GO" id="GO:0042773">
    <property type="term" value="P:ATP synthesis coupled electron transport"/>
    <property type="evidence" value="ECO:0007669"/>
    <property type="project" value="InterPro"/>
</dbReference>
<dbReference type="GO" id="GO:0015990">
    <property type="term" value="P:electron transport coupled proton transport"/>
    <property type="evidence" value="ECO:0007669"/>
    <property type="project" value="TreeGrafter"/>
</dbReference>
<dbReference type="HAMAP" id="MF_00491">
    <property type="entry name" value="NDH1_NuoM"/>
    <property type="match status" value="1"/>
</dbReference>
<dbReference type="InterPro" id="IPR022997">
    <property type="entry name" value="NADH_Q_OxRdtase_chain4"/>
</dbReference>
<dbReference type="InterPro" id="IPR010227">
    <property type="entry name" value="NADH_Q_OxRdtase_chainM/4"/>
</dbReference>
<dbReference type="InterPro" id="IPR003918">
    <property type="entry name" value="NADH_UbQ_OxRdtase"/>
</dbReference>
<dbReference type="InterPro" id="IPR001750">
    <property type="entry name" value="ND/Mrp_TM"/>
</dbReference>
<dbReference type="NCBIfam" id="TIGR01972">
    <property type="entry name" value="NDH_I_M"/>
    <property type="match status" value="1"/>
</dbReference>
<dbReference type="NCBIfam" id="NF002713">
    <property type="entry name" value="PRK02546.1"/>
    <property type="match status" value="1"/>
</dbReference>
<dbReference type="NCBIfam" id="NF009212">
    <property type="entry name" value="PRK12561.1"/>
    <property type="match status" value="1"/>
</dbReference>
<dbReference type="PANTHER" id="PTHR43507:SF21">
    <property type="entry name" value="NAD(P)H-QUINONE OXIDOREDUCTASE CHAIN 4, CHLOROPLASTIC"/>
    <property type="match status" value="1"/>
</dbReference>
<dbReference type="PANTHER" id="PTHR43507">
    <property type="entry name" value="NADH-UBIQUINONE OXIDOREDUCTASE CHAIN 4"/>
    <property type="match status" value="1"/>
</dbReference>
<dbReference type="Pfam" id="PF00361">
    <property type="entry name" value="Proton_antipo_M"/>
    <property type="match status" value="1"/>
</dbReference>
<dbReference type="PRINTS" id="PR01437">
    <property type="entry name" value="NUOXDRDTASE4"/>
</dbReference>
<proteinExistence type="inferred from homology"/>
<evidence type="ECO:0000255" key="1">
    <source>
        <dbReference type="HAMAP-Rule" id="MF_00491"/>
    </source>
</evidence>
<name>NU4C_PROMS</name>
<accession>A2BNU4</accession>
<gene>
    <name evidence="1" type="primary">ndhD</name>
    <name type="ordered locus">A9601_01671</name>
</gene>
<reference key="1">
    <citation type="journal article" date="2007" name="PLoS Genet.">
        <title>Patterns and implications of gene gain and loss in the evolution of Prochlorococcus.</title>
        <authorList>
            <person name="Kettler G.C."/>
            <person name="Martiny A.C."/>
            <person name="Huang K."/>
            <person name="Zucker J."/>
            <person name="Coleman M.L."/>
            <person name="Rodrigue S."/>
            <person name="Chen F."/>
            <person name="Lapidus A."/>
            <person name="Ferriera S."/>
            <person name="Johnson J."/>
            <person name="Steglich C."/>
            <person name="Church G.M."/>
            <person name="Richardson P."/>
            <person name="Chisholm S.W."/>
        </authorList>
    </citation>
    <scope>NUCLEOTIDE SEQUENCE [LARGE SCALE GENOMIC DNA]</scope>
    <source>
        <strain>AS9601</strain>
    </source>
</reference>
<keyword id="KW-0472">Membrane</keyword>
<keyword id="KW-0520">NAD</keyword>
<keyword id="KW-0521">NADP</keyword>
<keyword id="KW-0618">Plastoquinone</keyword>
<keyword id="KW-0874">Quinone</keyword>
<keyword id="KW-0793">Thylakoid</keyword>
<keyword id="KW-1278">Translocase</keyword>
<keyword id="KW-0812">Transmembrane</keyword>
<keyword id="KW-1133">Transmembrane helix</keyword>
<sequence length="534" mass="58330">MLGTLGAGLSNFPWLSASILFPIGSAFVIPFFPDKGDGKEVRWFALSIALITFLITVGSYINGFDISNENVQLKENISWLPDLGLTWSVGADGMSMPLILLTSFITALAVLAAWPVKFKPKLFFFLILVMDGGQIAVFAVQDMLLFFLTWELELIPVYLLLAIWGGKNRQYAATKFIIYTAGSSIFILLAALAMGFYGTEIPNFEFSHLAAQDFSQKFQILCYVGLLIAFGVKLPIVPLHTWLPDAHGEATAPVHMLLAGILLKMGGYALLRFNAQLLPVAHAQFAPLLIVLGVVNIIYAALTSFAQRNLKRKIAYSSISHMGFVLIGIGSFSSLGTSGAMLQMVSHGLIGASLFFLVGATYDRTKTLKLDEMSGVGQKMRIMFALWTACSLASLALPGMSGFVSELMVFTGFVTDEVYTLPFRVVMASLAAIGVILTPIYLLSMLREIFFGKENPKLIEERKLIDAEPREVYIIACLLLPIIGIGLYPRLVTESYIASINNLVDRDLTAIKSAAKANIFSGTKKNDILKAPTI</sequence>
<feature type="chain" id="PRO_0000343235" description="NAD(P)H-quinone oxidoreductase chain 4">
    <location>
        <begin position="1"/>
        <end position="534"/>
    </location>
</feature>
<feature type="transmembrane region" description="Helical" evidence="1">
    <location>
        <begin position="12"/>
        <end position="32"/>
    </location>
</feature>
<feature type="transmembrane region" description="Helical" evidence="1">
    <location>
        <begin position="44"/>
        <end position="64"/>
    </location>
</feature>
<feature type="transmembrane region" description="Helical" evidence="1">
    <location>
        <begin position="96"/>
        <end position="116"/>
    </location>
</feature>
<feature type="transmembrane region" description="Helical" evidence="1">
    <location>
        <begin position="120"/>
        <end position="140"/>
    </location>
</feature>
<feature type="transmembrane region" description="Helical" evidence="1">
    <location>
        <begin position="144"/>
        <end position="164"/>
    </location>
</feature>
<feature type="transmembrane region" description="Helical" evidence="1">
    <location>
        <begin position="176"/>
        <end position="196"/>
    </location>
</feature>
<feature type="transmembrane region" description="Helical" evidence="1">
    <location>
        <begin position="220"/>
        <end position="240"/>
    </location>
</feature>
<feature type="transmembrane region" description="Helical" evidence="1">
    <location>
        <begin position="251"/>
        <end position="271"/>
    </location>
</feature>
<feature type="transmembrane region" description="Helical" evidence="1">
    <location>
        <begin position="285"/>
        <end position="305"/>
    </location>
</feature>
<feature type="transmembrane region" description="Helical" evidence="1">
    <location>
        <begin position="314"/>
        <end position="334"/>
    </location>
</feature>
<feature type="transmembrane region" description="Helical" evidence="1">
    <location>
        <begin position="340"/>
        <end position="360"/>
    </location>
</feature>
<feature type="transmembrane region" description="Helical" evidence="1">
    <location>
        <begin position="384"/>
        <end position="404"/>
    </location>
</feature>
<feature type="transmembrane region" description="Helical" evidence="1">
    <location>
        <begin position="425"/>
        <end position="445"/>
    </location>
</feature>
<feature type="transmembrane region" description="Helical" evidence="1">
    <location>
        <begin position="472"/>
        <end position="492"/>
    </location>
</feature>